<dbReference type="EC" id="3.4.-.-"/>
<dbReference type="EMBL" id="DQ309433">
    <property type="protein sequence ID" value="ABC46697.1"/>
    <property type="molecule type" value="mRNA"/>
</dbReference>
<dbReference type="EMBL" id="AAFI02000069">
    <property type="protein sequence ID" value="EAL65137.1"/>
    <property type="molecule type" value="Genomic_DNA"/>
</dbReference>
<dbReference type="RefSeq" id="XP_638491.1">
    <property type="nucleotide sequence ID" value="XM_633399.1"/>
</dbReference>
<dbReference type="SMR" id="Q54PF3"/>
<dbReference type="FunCoup" id="Q54PF3">
    <property type="interactions" value="1251"/>
</dbReference>
<dbReference type="STRING" id="44689.Q54PF3"/>
<dbReference type="MEROPS" id="M67.A13"/>
<dbReference type="PaxDb" id="44689-DDB0233103"/>
<dbReference type="EnsemblProtists" id="EAL65137">
    <property type="protein sequence ID" value="EAL65137"/>
    <property type="gene ID" value="DDB_G0284597"/>
</dbReference>
<dbReference type="GeneID" id="8624671"/>
<dbReference type="KEGG" id="ddi:DDB_G0284597"/>
<dbReference type="dictyBase" id="DDB_G0284597">
    <property type="gene designation" value="csn5"/>
</dbReference>
<dbReference type="VEuPathDB" id="AmoebaDB:DDB_G0284597"/>
<dbReference type="eggNOG" id="KOG1554">
    <property type="taxonomic scope" value="Eukaryota"/>
</dbReference>
<dbReference type="HOGENOM" id="CLU_053034_0_2_1"/>
<dbReference type="InParanoid" id="Q54PF3"/>
<dbReference type="OMA" id="VKMKLFQ"/>
<dbReference type="PhylomeDB" id="Q54PF3"/>
<dbReference type="Reactome" id="R-DDI-5696394">
    <property type="pathway name" value="DNA Damage Recognition in GG-NER"/>
</dbReference>
<dbReference type="Reactome" id="R-DDI-6781823">
    <property type="pathway name" value="Formation of TC-NER Pre-Incision Complex"/>
</dbReference>
<dbReference type="Reactome" id="R-DDI-8856825">
    <property type="pathway name" value="Cargo recognition for clathrin-mediated endocytosis"/>
</dbReference>
<dbReference type="Reactome" id="R-DDI-8951664">
    <property type="pathway name" value="Neddylation"/>
</dbReference>
<dbReference type="PRO" id="PR:Q54PF3"/>
<dbReference type="Proteomes" id="UP000002195">
    <property type="component" value="Chromosome 4"/>
</dbReference>
<dbReference type="GO" id="GO:0008180">
    <property type="term" value="C:COP9 signalosome"/>
    <property type="evidence" value="ECO:0000353"/>
    <property type="project" value="dictyBase"/>
</dbReference>
<dbReference type="GO" id="GO:0005737">
    <property type="term" value="C:cytoplasm"/>
    <property type="evidence" value="ECO:0000318"/>
    <property type="project" value="GO_Central"/>
</dbReference>
<dbReference type="GO" id="GO:0019784">
    <property type="term" value="F:deNEDDylase activity"/>
    <property type="evidence" value="ECO:0000318"/>
    <property type="project" value="GO_Central"/>
</dbReference>
<dbReference type="GO" id="GO:0046872">
    <property type="term" value="F:metal ion binding"/>
    <property type="evidence" value="ECO:0007669"/>
    <property type="project" value="UniProtKB-KW"/>
</dbReference>
<dbReference type="GO" id="GO:0008237">
    <property type="term" value="F:metallopeptidase activity"/>
    <property type="evidence" value="ECO:0000318"/>
    <property type="project" value="GO_Central"/>
</dbReference>
<dbReference type="GO" id="GO:0019954">
    <property type="term" value="P:asexual reproduction"/>
    <property type="evidence" value="ECO:0000315"/>
    <property type="project" value="dictyBase"/>
</dbReference>
<dbReference type="GO" id="GO:0006508">
    <property type="term" value="P:proteolysis"/>
    <property type="evidence" value="ECO:0007669"/>
    <property type="project" value="UniProtKB-KW"/>
</dbReference>
<dbReference type="GO" id="GO:0051726">
    <property type="term" value="P:regulation of cell cycle"/>
    <property type="evidence" value="ECO:0000318"/>
    <property type="project" value="GO_Central"/>
</dbReference>
<dbReference type="CDD" id="cd08069">
    <property type="entry name" value="MPN_RPN11_CSN5"/>
    <property type="match status" value="1"/>
</dbReference>
<dbReference type="FunFam" id="3.40.140.10:FF:000003">
    <property type="entry name" value="COP9 signalosome complex subunit 5"/>
    <property type="match status" value="1"/>
</dbReference>
<dbReference type="Gene3D" id="3.40.140.10">
    <property type="entry name" value="Cytidine Deaminase, domain 2"/>
    <property type="match status" value="1"/>
</dbReference>
<dbReference type="InterPro" id="IPR040961">
    <property type="entry name" value="CSN5_C"/>
</dbReference>
<dbReference type="InterPro" id="IPR000555">
    <property type="entry name" value="JAMM/MPN+_dom"/>
</dbReference>
<dbReference type="InterPro" id="IPR050242">
    <property type="entry name" value="JAMM_MPN+_peptidase_M67A"/>
</dbReference>
<dbReference type="InterPro" id="IPR037518">
    <property type="entry name" value="MPN"/>
</dbReference>
<dbReference type="PANTHER" id="PTHR10410">
    <property type="entry name" value="EUKARYOTIC TRANSLATION INITIATION FACTOR 3 -RELATED"/>
    <property type="match status" value="1"/>
</dbReference>
<dbReference type="Pfam" id="PF18323">
    <property type="entry name" value="CSN5_C"/>
    <property type="match status" value="1"/>
</dbReference>
<dbReference type="Pfam" id="PF01398">
    <property type="entry name" value="JAB"/>
    <property type="match status" value="1"/>
</dbReference>
<dbReference type="SMART" id="SM00232">
    <property type="entry name" value="JAB_MPN"/>
    <property type="match status" value="1"/>
</dbReference>
<dbReference type="SUPFAM" id="SSF102712">
    <property type="entry name" value="JAB1/MPN domain"/>
    <property type="match status" value="1"/>
</dbReference>
<dbReference type="PROSITE" id="PS50249">
    <property type="entry name" value="MPN"/>
    <property type="match status" value="1"/>
</dbReference>
<protein>
    <recommendedName>
        <fullName>COP9 signalosome complex subunit 5</fullName>
        <shortName>Signalosome subunit 5</shortName>
        <ecNumber>3.4.-.-</ecNumber>
    </recommendedName>
</protein>
<organism>
    <name type="scientific">Dictyostelium discoideum</name>
    <name type="common">Social amoeba</name>
    <dbReference type="NCBI Taxonomy" id="44689"/>
    <lineage>
        <taxon>Eukaryota</taxon>
        <taxon>Amoebozoa</taxon>
        <taxon>Evosea</taxon>
        <taxon>Eumycetozoa</taxon>
        <taxon>Dictyostelia</taxon>
        <taxon>Dictyosteliales</taxon>
        <taxon>Dictyosteliaceae</taxon>
        <taxon>Dictyostelium</taxon>
    </lineage>
</organism>
<reference key="1">
    <citation type="journal article" date="2006" name="Eur. J. Cell Biol.">
        <title>The COP9 signalosome regulates cell proliferation of Dictyostelium discoideum.</title>
        <authorList>
            <person name="Rosel D."/>
            <person name="Kimmel A.R."/>
        </authorList>
    </citation>
    <scope>NUCLEOTIDE SEQUENCE [MRNA]</scope>
    <scope>IDENTIFICATION IN THE CSN COMPLEX</scope>
</reference>
<reference key="2">
    <citation type="journal article" date="2005" name="Nature">
        <title>The genome of the social amoeba Dictyostelium discoideum.</title>
        <authorList>
            <person name="Eichinger L."/>
            <person name="Pachebat J.A."/>
            <person name="Gloeckner G."/>
            <person name="Rajandream M.A."/>
            <person name="Sucgang R."/>
            <person name="Berriman M."/>
            <person name="Song J."/>
            <person name="Olsen R."/>
            <person name="Szafranski K."/>
            <person name="Xu Q."/>
            <person name="Tunggal B."/>
            <person name="Kummerfeld S."/>
            <person name="Madera M."/>
            <person name="Konfortov B.A."/>
            <person name="Rivero F."/>
            <person name="Bankier A.T."/>
            <person name="Lehmann R."/>
            <person name="Hamlin N."/>
            <person name="Davies R."/>
            <person name="Gaudet P."/>
            <person name="Fey P."/>
            <person name="Pilcher K."/>
            <person name="Chen G."/>
            <person name="Saunders D."/>
            <person name="Sodergren E.J."/>
            <person name="Davis P."/>
            <person name="Kerhornou A."/>
            <person name="Nie X."/>
            <person name="Hall N."/>
            <person name="Anjard C."/>
            <person name="Hemphill L."/>
            <person name="Bason N."/>
            <person name="Farbrother P."/>
            <person name="Desany B."/>
            <person name="Just E."/>
            <person name="Morio T."/>
            <person name="Rost R."/>
            <person name="Churcher C.M."/>
            <person name="Cooper J."/>
            <person name="Haydock S."/>
            <person name="van Driessche N."/>
            <person name="Cronin A."/>
            <person name="Goodhead I."/>
            <person name="Muzny D.M."/>
            <person name="Mourier T."/>
            <person name="Pain A."/>
            <person name="Lu M."/>
            <person name="Harper D."/>
            <person name="Lindsay R."/>
            <person name="Hauser H."/>
            <person name="James K.D."/>
            <person name="Quiles M."/>
            <person name="Madan Babu M."/>
            <person name="Saito T."/>
            <person name="Buchrieser C."/>
            <person name="Wardroper A."/>
            <person name="Felder M."/>
            <person name="Thangavelu M."/>
            <person name="Johnson D."/>
            <person name="Knights A."/>
            <person name="Loulseged H."/>
            <person name="Mungall K.L."/>
            <person name="Oliver K."/>
            <person name="Price C."/>
            <person name="Quail M.A."/>
            <person name="Urushihara H."/>
            <person name="Hernandez J."/>
            <person name="Rabbinowitsch E."/>
            <person name="Steffen D."/>
            <person name="Sanders M."/>
            <person name="Ma J."/>
            <person name="Kohara Y."/>
            <person name="Sharp S."/>
            <person name="Simmonds M.N."/>
            <person name="Spiegler S."/>
            <person name="Tivey A."/>
            <person name="Sugano S."/>
            <person name="White B."/>
            <person name="Walker D."/>
            <person name="Woodward J.R."/>
            <person name="Winckler T."/>
            <person name="Tanaka Y."/>
            <person name="Shaulsky G."/>
            <person name="Schleicher M."/>
            <person name="Weinstock G.M."/>
            <person name="Rosenthal A."/>
            <person name="Cox E.C."/>
            <person name="Chisholm R.L."/>
            <person name="Gibbs R.A."/>
            <person name="Loomis W.F."/>
            <person name="Platzer M."/>
            <person name="Kay R.R."/>
            <person name="Williams J.G."/>
            <person name="Dear P.H."/>
            <person name="Noegel A.A."/>
            <person name="Barrell B.G."/>
            <person name="Kuspa A."/>
        </authorList>
    </citation>
    <scope>NUCLEOTIDE SEQUENCE [LARGE SCALE GENOMIC DNA]</scope>
    <source>
        <strain>AX4</strain>
    </source>
</reference>
<gene>
    <name type="primary">csn5</name>
    <name type="ORF">DDB_G0284597</name>
</gene>
<name>CSN5_DICDI</name>
<keyword id="KW-0963">Cytoplasm</keyword>
<keyword id="KW-0378">Hydrolase</keyword>
<keyword id="KW-0479">Metal-binding</keyword>
<keyword id="KW-0482">Metalloprotease</keyword>
<keyword id="KW-0539">Nucleus</keyword>
<keyword id="KW-0645">Protease</keyword>
<keyword id="KW-1185">Reference proteome</keyword>
<keyword id="KW-0736">Signalosome</keyword>
<keyword id="KW-0862">Zinc</keyword>
<proteinExistence type="evidence at protein level"/>
<evidence type="ECO:0000250" key="1"/>
<evidence type="ECO:0000255" key="2">
    <source>
        <dbReference type="PROSITE-ProRule" id="PRU01182"/>
    </source>
</evidence>
<evidence type="ECO:0000269" key="3">
    <source>
    </source>
</evidence>
<evidence type="ECO:0000305" key="4"/>
<comment type="function">
    <text>Probable protease subunit of the COP9 signalosome complex (CSN), a complex involved in various cellular and developmental processes. The CSN complex is an essential regulator of the ubiquitin (Ubl) conjugation pathway by mediating the deneddylation of the cullin subunits of E3 ligasew complexes, leading to modify the Ubl ligase activity. In the complex, it probably acts as the catalytic center that mediates the cleavage of Nedd8 from cullins. Csn5 is essential for growth or survival.</text>
</comment>
<comment type="cofactor">
    <cofactor evidence="1">
        <name>a divalent metal cation</name>
        <dbReference type="ChEBI" id="CHEBI:60240"/>
    </cofactor>
</comment>
<comment type="subunit">
    <text evidence="3">Component of the CSN complex. The holocomplex is comprised of 8 subunits csn1-8. In the complex, it probably interacts directly with csn1, csn2, csn3, csn4, csn6 and csn8.</text>
</comment>
<comment type="subcellular location">
    <subcellularLocation>
        <location evidence="1">Cytoplasm</location>
    </subcellularLocation>
    <subcellularLocation>
        <location evidence="1">Nucleus</location>
    </subcellularLocation>
</comment>
<comment type="domain">
    <text evidence="1">The JAMM motif is essential for the protease activity of the CSN complex resulting in deneddylation of cullins. It constitutes the catalytic center of the complex (By similarity).</text>
</comment>
<comment type="similarity">
    <text evidence="4">Belongs to the peptidase M67A family. CSN5 subfamily.</text>
</comment>
<feature type="chain" id="PRO_0000327768" description="COP9 signalosome complex subunit 5">
    <location>
        <begin position="1"/>
        <end position="332"/>
    </location>
</feature>
<feature type="domain" description="MPN" evidence="2">
    <location>
        <begin position="54"/>
        <end position="191"/>
    </location>
</feature>
<feature type="short sequence motif" description="JAMM motif" evidence="2">
    <location>
        <begin position="137"/>
        <end position="150"/>
    </location>
</feature>
<feature type="binding site" evidence="2">
    <location>
        <position position="137"/>
    </location>
    <ligand>
        <name>Zn(2+)</name>
        <dbReference type="ChEBI" id="CHEBI:29105"/>
        <note>catalytic</note>
    </ligand>
</feature>
<feature type="binding site" evidence="2">
    <location>
        <position position="139"/>
    </location>
    <ligand>
        <name>Zn(2+)</name>
        <dbReference type="ChEBI" id="CHEBI:29105"/>
        <note>catalytic</note>
    </ligand>
</feature>
<feature type="binding site" evidence="2">
    <location>
        <position position="150"/>
    </location>
    <ligand>
        <name>Zn(2+)</name>
        <dbReference type="ChEBI" id="CHEBI:29105"/>
        <note>catalytic</note>
    </ligand>
</feature>
<sequence>MSKNGAADALKTFELENNIQTIDHDQLFKYDPQQYQQFLQSKPWSKDPHYFKHVKISAIALLKMVMHARSGGKLEVMGMLMGKVENNTMIIMDSFALPVEGTETRVNAQVEAYEYMVEYLELIKQTGRLENALGWYHSHPGYGCWLSGIDVGTQSVNQQYSEPWLGIVIDPTRTVSAGKVEIGAFRTYPQGYKPPNEGPSEYQSIPLSKIEDFGVHCKQYYSLEITYFKSSLDQQLLDKLWNKYWVNTLSSSPIFSNRDYITGQINDLSEKLEQAETQLSHSRSSILDKKKEESLLSKVSKDSSKVTIEQVQGIMSQVFKNSIFNECQTTKQ</sequence>
<accession>Q54PF3</accession>
<accession>Q2PQ74</accession>